<dbReference type="EC" id="1.14.19.2" evidence="2"/>
<dbReference type="EMBL" id="U68756">
    <property type="protein sequence ID" value="AAB41041.1"/>
    <property type="status" value="ALT_INIT"/>
    <property type="molecule type" value="mRNA"/>
</dbReference>
<dbReference type="SMR" id="O24428"/>
<dbReference type="FunCoup" id="O24428">
    <property type="interactions" value="821"/>
</dbReference>
<dbReference type="InParanoid" id="O24428"/>
<dbReference type="UniPathway" id="UPA00199"/>
<dbReference type="Proteomes" id="UP000504607">
    <property type="component" value="Unplaced"/>
</dbReference>
<dbReference type="GO" id="GO:0009570">
    <property type="term" value="C:chloroplast stroma"/>
    <property type="evidence" value="ECO:0007669"/>
    <property type="project" value="TreeGrafter"/>
</dbReference>
<dbReference type="GO" id="GO:0046872">
    <property type="term" value="F:metal ion binding"/>
    <property type="evidence" value="ECO:0007669"/>
    <property type="project" value="UniProtKB-KW"/>
</dbReference>
<dbReference type="GO" id="GO:0045300">
    <property type="term" value="F:stearoyl-[ACP] desaturase activity"/>
    <property type="evidence" value="ECO:0007669"/>
    <property type="project" value="UniProtKB-EC"/>
</dbReference>
<dbReference type="GO" id="GO:0006633">
    <property type="term" value="P:fatty acid biosynthetic process"/>
    <property type="evidence" value="ECO:0007669"/>
    <property type="project" value="UniProtKB-KW"/>
</dbReference>
<dbReference type="CDD" id="cd01050">
    <property type="entry name" value="Acyl_ACP_Desat"/>
    <property type="match status" value="1"/>
</dbReference>
<dbReference type="FunFam" id="1.10.620.20:FF:000002">
    <property type="entry name" value="Stearoyl-[acyl-carrier-protein] 9-desaturase, chloroplastic"/>
    <property type="match status" value="1"/>
</dbReference>
<dbReference type="Gene3D" id="1.10.620.20">
    <property type="entry name" value="Ribonucleotide Reductase, subunit A"/>
    <property type="match status" value="1"/>
</dbReference>
<dbReference type="InterPro" id="IPR005803">
    <property type="entry name" value="FADS-2_CS"/>
</dbReference>
<dbReference type="InterPro" id="IPR005067">
    <property type="entry name" value="Fatty_acid_desaturase-2"/>
</dbReference>
<dbReference type="InterPro" id="IPR009078">
    <property type="entry name" value="Ferritin-like_SF"/>
</dbReference>
<dbReference type="InterPro" id="IPR012348">
    <property type="entry name" value="RNR-like"/>
</dbReference>
<dbReference type="PANTHER" id="PTHR31155">
    <property type="entry name" value="ACYL- ACYL-CARRIER-PROTEIN DESATURASE-RELATED"/>
    <property type="match status" value="1"/>
</dbReference>
<dbReference type="PANTHER" id="PTHR31155:SF9">
    <property type="entry name" value="STEAROYL-[ACYL-CARRIER-PROTEIN] 9-DESATURASE 7, CHLOROPLASTIC"/>
    <property type="match status" value="1"/>
</dbReference>
<dbReference type="Pfam" id="PF03405">
    <property type="entry name" value="FA_desaturase_2"/>
    <property type="match status" value="1"/>
</dbReference>
<dbReference type="PIRSF" id="PIRSF000346">
    <property type="entry name" value="Dlt9_acylACP_des"/>
    <property type="match status" value="1"/>
</dbReference>
<dbReference type="SUPFAM" id="SSF47240">
    <property type="entry name" value="Ferritin-like"/>
    <property type="match status" value="1"/>
</dbReference>
<dbReference type="PROSITE" id="PS00574">
    <property type="entry name" value="FATTY_ACID_DESATUR_2"/>
    <property type="match status" value="1"/>
</dbReference>
<feature type="transit peptide" description="Chloroplast" evidence="1">
    <location>
        <begin position="1"/>
        <end position="31"/>
    </location>
</feature>
<feature type="chain" id="PRO_0000007131" description="Stearoyl-[acyl-carrier-protein] 9-desaturase, chloroplastic">
    <location>
        <begin position="32"/>
        <end position="393"/>
    </location>
</feature>
<feature type="binding site" evidence="2">
    <location>
        <position position="135"/>
    </location>
    <ligand>
        <name>Fe cation</name>
        <dbReference type="ChEBI" id="CHEBI:24875"/>
        <label>1</label>
    </ligand>
</feature>
<feature type="binding site" evidence="2">
    <location>
        <position position="173"/>
    </location>
    <ligand>
        <name>Fe cation</name>
        <dbReference type="ChEBI" id="CHEBI:24875"/>
        <label>1</label>
    </ligand>
</feature>
<feature type="binding site" evidence="2">
    <location>
        <position position="173"/>
    </location>
    <ligand>
        <name>Fe cation</name>
        <dbReference type="ChEBI" id="CHEBI:24875"/>
        <label>2</label>
    </ligand>
</feature>
<feature type="binding site" evidence="2">
    <location>
        <position position="176"/>
    </location>
    <ligand>
        <name>Fe cation</name>
        <dbReference type="ChEBI" id="CHEBI:24875"/>
        <label>1</label>
    </ligand>
</feature>
<feature type="binding site" evidence="2">
    <location>
        <position position="226"/>
    </location>
    <ligand>
        <name>Fe cation</name>
        <dbReference type="ChEBI" id="CHEBI:24875"/>
        <label>2</label>
    </ligand>
</feature>
<feature type="binding site" evidence="2">
    <location>
        <position position="259"/>
    </location>
    <ligand>
        <name>Fe cation</name>
        <dbReference type="ChEBI" id="CHEBI:24875"/>
        <label>1</label>
    </ligand>
</feature>
<feature type="binding site" evidence="2">
    <location>
        <position position="259"/>
    </location>
    <ligand>
        <name>Fe cation</name>
        <dbReference type="ChEBI" id="CHEBI:24875"/>
        <label>2</label>
    </ligand>
</feature>
<feature type="binding site" evidence="2">
    <location>
        <position position="262"/>
    </location>
    <ligand>
        <name>Fe cation</name>
        <dbReference type="ChEBI" id="CHEBI:24875"/>
        <label>2</label>
    </ligand>
</feature>
<accession>O24428</accession>
<comment type="function">
    <text evidence="2">Converts stearoyl-ACP to oleoyl-ACP by introduction of a cis double bond between carbons 9 and 10 of the acyl chain.</text>
</comment>
<comment type="catalytic activity">
    <reaction evidence="2">
        <text>octadecanoyl-[ACP] + 2 reduced [2Fe-2S]-[ferredoxin] + O2 + 2 H(+) = (9Z)-octadecenoyl-[ACP] + 2 oxidized [2Fe-2S]-[ferredoxin] + 2 H2O</text>
        <dbReference type="Rhea" id="RHEA:11776"/>
        <dbReference type="Rhea" id="RHEA-COMP:9656"/>
        <dbReference type="Rhea" id="RHEA-COMP:9924"/>
        <dbReference type="Rhea" id="RHEA-COMP:10000"/>
        <dbReference type="Rhea" id="RHEA-COMP:10001"/>
        <dbReference type="ChEBI" id="CHEBI:15377"/>
        <dbReference type="ChEBI" id="CHEBI:15378"/>
        <dbReference type="ChEBI" id="CHEBI:15379"/>
        <dbReference type="ChEBI" id="CHEBI:33737"/>
        <dbReference type="ChEBI" id="CHEBI:33738"/>
        <dbReference type="ChEBI" id="CHEBI:78495"/>
        <dbReference type="ChEBI" id="CHEBI:78783"/>
        <dbReference type="EC" id="1.14.19.2"/>
    </reaction>
</comment>
<comment type="cofactor">
    <cofactor evidence="2">
        <name>Fe(2+)</name>
        <dbReference type="ChEBI" id="CHEBI:29033"/>
    </cofactor>
    <text evidence="2">Binds 2 Fe(2+) ions per subunit.</text>
</comment>
<comment type="pathway">
    <text>Lipid metabolism; fatty acid metabolism.</text>
</comment>
<comment type="subunit">
    <text evidence="2">Homodimer.</text>
</comment>
<comment type="subcellular location">
    <subcellularLocation>
        <location evidence="2">Plastid</location>
        <location evidence="2">Chloroplast</location>
    </subcellularLocation>
    <subcellularLocation>
        <location evidence="2">Plastid</location>
    </subcellularLocation>
    <text>In green tissue, found in chloroplasts. In non-photosynthetic tissue, found in plastids.</text>
</comment>
<comment type="similarity">
    <text evidence="3">Belongs to the fatty acid desaturase type 2 family.</text>
</comment>
<comment type="sequence caution" evidence="3">
    <conflict type="erroneous initiation">
        <sequence resource="EMBL-CDS" id="AAB41041"/>
    </conflict>
    <text>Extended N-terminus.</text>
</comment>
<sequence>MASMVAFRPEAFLCFSPPKTTRSTRSPRISMASTVGPSTKVEIPKKPFMPPREVHVQVTHSMPPQKIEIFKSLEDWAENNILVHLKPVEKCWQPQDFLPDPSSEGFHEEVKELRERSKEIPDGYYVCLVGDMITEEALPTYQTMLNTLDGVRDETGASLTSWAVWTRAWTAEENRHGDLLNKYLYLSGRVDMKQIEKTIQYLIGSGMDPRTENSPYLGFIYTSFQERATFISHGNTARHAKEHGDVKLAQICGTIASDEKRHETAYTKIVEKLFEIDPDGTVLSFADMMKKKISMPAHLMYDGQDDNLFEHFSAVAQRLGVDTAKDYADILEFLINRWKVGELTGFSGEGKRAQDFVCTLAPRIRRIEERAQERAKQAPRIPCSWIYGREVQL</sequence>
<proteinExistence type="evidence at transcript level"/>
<evidence type="ECO:0000250" key="1">
    <source>
        <dbReference type="UniProtKB" id="P22243"/>
    </source>
</evidence>
<evidence type="ECO:0000250" key="2">
    <source>
        <dbReference type="UniProtKB" id="P22337"/>
    </source>
</evidence>
<evidence type="ECO:0000305" key="3"/>
<organism>
    <name type="scientific">Elaeis guineensis var. tenera</name>
    <name type="common">Oil palm</name>
    <dbReference type="NCBI Taxonomy" id="51953"/>
    <lineage>
        <taxon>Eukaryota</taxon>
        <taxon>Viridiplantae</taxon>
        <taxon>Streptophyta</taxon>
        <taxon>Embryophyta</taxon>
        <taxon>Tracheophyta</taxon>
        <taxon>Spermatophyta</taxon>
        <taxon>Magnoliopsida</taxon>
        <taxon>Liliopsida</taxon>
        <taxon>Arecaceae</taxon>
        <taxon>Arecoideae</taxon>
        <taxon>Cocoseae</taxon>
        <taxon>Elaeidinae</taxon>
        <taxon>Elaeis</taxon>
    </lineage>
</organism>
<name>STAD_ELAGV</name>
<protein>
    <recommendedName>
        <fullName>Stearoyl-[acyl-carrier-protein] 9-desaturase, chloroplastic</fullName>
        <shortName>Stearoyl-ACP desaturase</shortName>
        <ecNumber evidence="2">1.14.19.2</ecNumber>
    </recommendedName>
    <alternativeName>
        <fullName>Acyl-[acyl-carrier-protein] desaturase</fullName>
    </alternativeName>
</protein>
<reference key="1">
    <citation type="online journal article" date="1996" name="Plant Gene Register">
        <title>Nucleotide sequence of a cDNA clone encoding stearoyl-acyl-carrier-protein from Elaeis guineensis var tenera.</title>
        <authorList>
            <person name="Shah F.H."/>
            <person name="Rashid O."/>
        </authorList>
        <locator>PGR96-110</locator>
    </citation>
    <scope>NUCLEOTIDE SEQUENCE [MRNA]</scope>
    <source>
        <tissue>Mesocarp</tissue>
    </source>
</reference>
<keyword id="KW-0150">Chloroplast</keyword>
<keyword id="KW-0275">Fatty acid biosynthesis</keyword>
<keyword id="KW-0276">Fatty acid metabolism</keyword>
<keyword id="KW-0408">Iron</keyword>
<keyword id="KW-0444">Lipid biosynthesis</keyword>
<keyword id="KW-0443">Lipid metabolism</keyword>
<keyword id="KW-0479">Metal-binding</keyword>
<keyword id="KW-0560">Oxidoreductase</keyword>
<keyword id="KW-0934">Plastid</keyword>
<keyword id="KW-1185">Reference proteome</keyword>
<keyword id="KW-0809">Transit peptide</keyword>